<name>SYL_CERS5</name>
<protein>
    <recommendedName>
        <fullName evidence="1">Leucine--tRNA ligase</fullName>
        <ecNumber evidence="1">6.1.1.4</ecNumber>
    </recommendedName>
    <alternativeName>
        <fullName evidence="1">Leucyl-tRNA synthetase</fullName>
        <shortName evidence="1">LeuRS</shortName>
    </alternativeName>
</protein>
<proteinExistence type="inferred from homology"/>
<evidence type="ECO:0000255" key="1">
    <source>
        <dbReference type="HAMAP-Rule" id="MF_00049"/>
    </source>
</evidence>
<comment type="catalytic activity">
    <reaction evidence="1">
        <text>tRNA(Leu) + L-leucine + ATP = L-leucyl-tRNA(Leu) + AMP + diphosphate</text>
        <dbReference type="Rhea" id="RHEA:11688"/>
        <dbReference type="Rhea" id="RHEA-COMP:9613"/>
        <dbReference type="Rhea" id="RHEA-COMP:9622"/>
        <dbReference type="ChEBI" id="CHEBI:30616"/>
        <dbReference type="ChEBI" id="CHEBI:33019"/>
        <dbReference type="ChEBI" id="CHEBI:57427"/>
        <dbReference type="ChEBI" id="CHEBI:78442"/>
        <dbReference type="ChEBI" id="CHEBI:78494"/>
        <dbReference type="ChEBI" id="CHEBI:456215"/>
        <dbReference type="EC" id="6.1.1.4"/>
    </reaction>
</comment>
<comment type="subcellular location">
    <subcellularLocation>
        <location evidence="1">Cytoplasm</location>
    </subcellularLocation>
</comment>
<comment type="similarity">
    <text evidence="1">Belongs to the class-I aminoacyl-tRNA synthetase family.</text>
</comment>
<sequence length="873" mass="97366">MSRYDPAATESRWQAAWDEAGVFTARHDPSRPKYYVLEMFPYPSGRIHMGHVRNYTMGDVVARQKAAAGYSVLHPMGWDAFGMPAENAAMERGGHPKDWTYGNIADMRAQMKPLGLSIDWSREFATCDPEYYGQQQAMFIDMLEAGLIYRKNAVVNWDPVDMTVLANEQVIDGKGWRSNAPVERRELTQWFFRISDYAGELLEALDRLKDWPEKVRLMQANWIGQSRGLQFAFSTVNAPEGFDRLEVYTTRPDTLLGASFAAISPDHPLAKHLERHDAGVAEFVAECRRVGTSEEALEKAEKKGFDTGIRVRHPFDTALELPVYIANFILMDYGTGAIFGCPAHDQRDFEFASKYGLPIPPVFVAEGTEEAPLTEAFVPMKSERVAYVRGFAGAEIQTGEEAVAAAIDFCESKGVGRGVTNYRLRDWGISRQRYWGCPIPVIHCETCGVVPEAKENLPVRLPDDVTFDVPGNPLDRHPTWRDCTCPKCGAKARRETDTMDTFVDSSWYYARFTAPRATTPTDPEEAEYWMNVDQYIGGIEHAILHLLYSRFFARAMQKTGHLPAKAIEPFNALFTQGMVTHEAYYSEEAKQEPVWQGMLEPGESPDTQMTVRHITYHFPEEVERTEDGAILKTTGQKLKVIPSTKMSKSKKNVVDPMNIISQFGADTARWFVMSDSPPERDVEWTASGAEAAFKHLGRVWRLADEIARAEGAPTAEDVALDRATAKAIAEVTQGIEGFAFNKAIAKLYEFTNTLSRSGAGAEAKRRAMRTMAQLMSPMVPHLAEEVWSMLGGEGLVAQAPWPKADPALLVDDMVTLPIQINGKRRAEVTVPKDMAASEVEKLVLADEAVQRALSGGAPKKLIVVPGRIVNVVI</sequence>
<dbReference type="EC" id="6.1.1.4" evidence="1"/>
<dbReference type="EMBL" id="CP000661">
    <property type="protein sequence ID" value="ABP72019.1"/>
    <property type="molecule type" value="Genomic_DNA"/>
</dbReference>
<dbReference type="SMR" id="A4WXA5"/>
<dbReference type="STRING" id="349102.Rsph17025_3135"/>
<dbReference type="KEGG" id="rsq:Rsph17025_3135"/>
<dbReference type="eggNOG" id="COG0495">
    <property type="taxonomic scope" value="Bacteria"/>
</dbReference>
<dbReference type="HOGENOM" id="CLU_004427_0_0_5"/>
<dbReference type="BioCyc" id="RSPH349102:G1G8M-3238-MONOMER"/>
<dbReference type="GO" id="GO:0005829">
    <property type="term" value="C:cytosol"/>
    <property type="evidence" value="ECO:0007669"/>
    <property type="project" value="TreeGrafter"/>
</dbReference>
<dbReference type="GO" id="GO:0002161">
    <property type="term" value="F:aminoacyl-tRNA deacylase activity"/>
    <property type="evidence" value="ECO:0007669"/>
    <property type="project" value="InterPro"/>
</dbReference>
<dbReference type="GO" id="GO:0005524">
    <property type="term" value="F:ATP binding"/>
    <property type="evidence" value="ECO:0007669"/>
    <property type="project" value="UniProtKB-UniRule"/>
</dbReference>
<dbReference type="GO" id="GO:0004823">
    <property type="term" value="F:leucine-tRNA ligase activity"/>
    <property type="evidence" value="ECO:0007669"/>
    <property type="project" value="UniProtKB-UniRule"/>
</dbReference>
<dbReference type="GO" id="GO:0006429">
    <property type="term" value="P:leucyl-tRNA aminoacylation"/>
    <property type="evidence" value="ECO:0007669"/>
    <property type="project" value="UniProtKB-UniRule"/>
</dbReference>
<dbReference type="CDD" id="cd07958">
    <property type="entry name" value="Anticodon_Ia_Leu_BEm"/>
    <property type="match status" value="1"/>
</dbReference>
<dbReference type="CDD" id="cd00812">
    <property type="entry name" value="LeuRS_core"/>
    <property type="match status" value="1"/>
</dbReference>
<dbReference type="FunFam" id="1.10.730.10:FF:000002">
    <property type="entry name" value="Leucine--tRNA ligase"/>
    <property type="match status" value="1"/>
</dbReference>
<dbReference type="FunFam" id="3.40.50.620:FF:000003">
    <property type="entry name" value="Leucine--tRNA ligase"/>
    <property type="match status" value="1"/>
</dbReference>
<dbReference type="Gene3D" id="3.40.50.620">
    <property type="entry name" value="HUPs"/>
    <property type="match status" value="2"/>
</dbReference>
<dbReference type="Gene3D" id="1.10.730.10">
    <property type="entry name" value="Isoleucyl-tRNA Synthetase, Domain 1"/>
    <property type="match status" value="1"/>
</dbReference>
<dbReference type="Gene3D" id="3.90.740.10">
    <property type="entry name" value="Valyl/Leucyl/Isoleucyl-tRNA synthetase, editing domain"/>
    <property type="match status" value="1"/>
</dbReference>
<dbReference type="HAMAP" id="MF_00049_B">
    <property type="entry name" value="Leu_tRNA_synth_B"/>
    <property type="match status" value="1"/>
</dbReference>
<dbReference type="InterPro" id="IPR001412">
    <property type="entry name" value="aa-tRNA-synth_I_CS"/>
</dbReference>
<dbReference type="InterPro" id="IPR002300">
    <property type="entry name" value="aa-tRNA-synth_Ia"/>
</dbReference>
<dbReference type="InterPro" id="IPR002302">
    <property type="entry name" value="Leu-tRNA-ligase"/>
</dbReference>
<dbReference type="InterPro" id="IPR025709">
    <property type="entry name" value="Leu_tRNA-synth_edit"/>
</dbReference>
<dbReference type="InterPro" id="IPR013155">
    <property type="entry name" value="M/V/L/I-tRNA-synth_anticd-bd"/>
</dbReference>
<dbReference type="InterPro" id="IPR015413">
    <property type="entry name" value="Methionyl/Leucyl_tRNA_Synth"/>
</dbReference>
<dbReference type="InterPro" id="IPR014729">
    <property type="entry name" value="Rossmann-like_a/b/a_fold"/>
</dbReference>
<dbReference type="InterPro" id="IPR009080">
    <property type="entry name" value="tRNAsynth_Ia_anticodon-bd"/>
</dbReference>
<dbReference type="InterPro" id="IPR009008">
    <property type="entry name" value="Val/Leu/Ile-tRNA-synth_edit"/>
</dbReference>
<dbReference type="NCBIfam" id="TIGR00396">
    <property type="entry name" value="leuS_bact"/>
    <property type="match status" value="1"/>
</dbReference>
<dbReference type="PANTHER" id="PTHR43740:SF2">
    <property type="entry name" value="LEUCINE--TRNA LIGASE, MITOCHONDRIAL"/>
    <property type="match status" value="1"/>
</dbReference>
<dbReference type="PANTHER" id="PTHR43740">
    <property type="entry name" value="LEUCYL-TRNA SYNTHETASE"/>
    <property type="match status" value="1"/>
</dbReference>
<dbReference type="Pfam" id="PF08264">
    <property type="entry name" value="Anticodon_1"/>
    <property type="match status" value="1"/>
</dbReference>
<dbReference type="Pfam" id="PF00133">
    <property type="entry name" value="tRNA-synt_1"/>
    <property type="match status" value="2"/>
</dbReference>
<dbReference type="Pfam" id="PF13603">
    <property type="entry name" value="tRNA-synt_1_2"/>
    <property type="match status" value="1"/>
</dbReference>
<dbReference type="Pfam" id="PF09334">
    <property type="entry name" value="tRNA-synt_1g"/>
    <property type="match status" value="1"/>
</dbReference>
<dbReference type="PRINTS" id="PR00985">
    <property type="entry name" value="TRNASYNTHLEU"/>
</dbReference>
<dbReference type="SUPFAM" id="SSF47323">
    <property type="entry name" value="Anticodon-binding domain of a subclass of class I aminoacyl-tRNA synthetases"/>
    <property type="match status" value="1"/>
</dbReference>
<dbReference type="SUPFAM" id="SSF52374">
    <property type="entry name" value="Nucleotidylyl transferase"/>
    <property type="match status" value="1"/>
</dbReference>
<dbReference type="SUPFAM" id="SSF50677">
    <property type="entry name" value="ValRS/IleRS/LeuRS editing domain"/>
    <property type="match status" value="1"/>
</dbReference>
<dbReference type="PROSITE" id="PS00178">
    <property type="entry name" value="AA_TRNA_LIGASE_I"/>
    <property type="match status" value="1"/>
</dbReference>
<organism>
    <name type="scientific">Cereibacter sphaeroides (strain ATCC 17025 / ATH 2.4.3)</name>
    <name type="common">Rhodobacter sphaeroides</name>
    <dbReference type="NCBI Taxonomy" id="349102"/>
    <lineage>
        <taxon>Bacteria</taxon>
        <taxon>Pseudomonadati</taxon>
        <taxon>Pseudomonadota</taxon>
        <taxon>Alphaproteobacteria</taxon>
        <taxon>Rhodobacterales</taxon>
        <taxon>Paracoccaceae</taxon>
        <taxon>Cereibacter</taxon>
    </lineage>
</organism>
<gene>
    <name evidence="1" type="primary">leuS</name>
    <name type="ordered locus">Rsph17025_3135</name>
</gene>
<reference key="1">
    <citation type="submission" date="2007-04" db="EMBL/GenBank/DDBJ databases">
        <title>Complete sequence of chromosome of Rhodobacter sphaeroides ATCC 17025.</title>
        <authorList>
            <consortium name="US DOE Joint Genome Institute"/>
            <person name="Copeland A."/>
            <person name="Lucas S."/>
            <person name="Lapidus A."/>
            <person name="Barry K."/>
            <person name="Detter J.C."/>
            <person name="Glavina del Rio T."/>
            <person name="Hammon N."/>
            <person name="Israni S."/>
            <person name="Dalin E."/>
            <person name="Tice H."/>
            <person name="Pitluck S."/>
            <person name="Chertkov O."/>
            <person name="Brettin T."/>
            <person name="Bruce D."/>
            <person name="Han C."/>
            <person name="Schmutz J."/>
            <person name="Larimer F."/>
            <person name="Land M."/>
            <person name="Hauser L."/>
            <person name="Kyrpides N."/>
            <person name="Kim E."/>
            <person name="Richardson P."/>
            <person name="Mackenzie C."/>
            <person name="Choudhary M."/>
            <person name="Donohue T.J."/>
            <person name="Kaplan S."/>
        </authorList>
    </citation>
    <scope>NUCLEOTIDE SEQUENCE [LARGE SCALE GENOMIC DNA]</scope>
    <source>
        <strain>ATCC 17025 / ATH 2.4.3</strain>
    </source>
</reference>
<feature type="chain" id="PRO_1000009415" description="Leucine--tRNA ligase">
    <location>
        <begin position="1"/>
        <end position="873"/>
    </location>
</feature>
<feature type="short sequence motif" description="'HIGH' region">
    <location>
        <begin position="41"/>
        <end position="51"/>
    </location>
</feature>
<feature type="short sequence motif" description="'KMSKS' region">
    <location>
        <begin position="645"/>
        <end position="649"/>
    </location>
</feature>
<feature type="binding site" evidence="1">
    <location>
        <position position="648"/>
    </location>
    <ligand>
        <name>ATP</name>
        <dbReference type="ChEBI" id="CHEBI:30616"/>
    </ligand>
</feature>
<accession>A4WXA5</accession>
<keyword id="KW-0030">Aminoacyl-tRNA synthetase</keyword>
<keyword id="KW-0067">ATP-binding</keyword>
<keyword id="KW-0963">Cytoplasm</keyword>
<keyword id="KW-0436">Ligase</keyword>
<keyword id="KW-0547">Nucleotide-binding</keyword>
<keyword id="KW-0648">Protein biosynthesis</keyword>